<keyword id="KW-0997">Cell inner membrane</keyword>
<keyword id="KW-1003">Cell membrane</keyword>
<keyword id="KW-0472">Membrane</keyword>
<keyword id="KW-1185">Reference proteome</keyword>
<keyword id="KW-0812">Transmembrane</keyword>
<keyword id="KW-1133">Transmembrane helix</keyword>
<reference key="1">
    <citation type="journal article" date="2005" name="Nucleic Acids Res.">
        <title>Genome dynamics and diversity of Shigella species, the etiologic agents of bacillary dysentery.</title>
        <authorList>
            <person name="Yang F."/>
            <person name="Yang J."/>
            <person name="Zhang X."/>
            <person name="Chen L."/>
            <person name="Jiang Y."/>
            <person name="Yan Y."/>
            <person name="Tang X."/>
            <person name="Wang J."/>
            <person name="Xiong Z."/>
            <person name="Dong J."/>
            <person name="Xue Y."/>
            <person name="Zhu Y."/>
            <person name="Xu X."/>
            <person name="Sun L."/>
            <person name="Chen S."/>
            <person name="Nie H."/>
            <person name="Peng J."/>
            <person name="Xu J."/>
            <person name="Wang Y."/>
            <person name="Yuan Z."/>
            <person name="Wen Y."/>
            <person name="Yao Z."/>
            <person name="Shen Y."/>
            <person name="Qiang B."/>
            <person name="Hou Y."/>
            <person name="Yu J."/>
            <person name="Jin Q."/>
        </authorList>
    </citation>
    <scope>NUCLEOTIDE SEQUENCE [LARGE SCALE GENOMIC DNA]</scope>
    <source>
        <strain>Sd197</strain>
    </source>
</reference>
<dbReference type="EMBL" id="CP000034">
    <property type="protein sequence ID" value="ABB63542.1"/>
    <property type="molecule type" value="Genomic_DNA"/>
</dbReference>
<dbReference type="RefSeq" id="WP_000626187.1">
    <property type="nucleotide sequence ID" value="NC_007606.1"/>
</dbReference>
<dbReference type="RefSeq" id="YP_405033.1">
    <property type="nucleotide sequence ID" value="NC_007606.1"/>
</dbReference>
<dbReference type="SMR" id="Q32AW3"/>
<dbReference type="STRING" id="300267.SDY_3568"/>
<dbReference type="EnsemblBacteria" id="ABB63542">
    <property type="protein sequence ID" value="ABB63542"/>
    <property type="gene ID" value="SDY_3568"/>
</dbReference>
<dbReference type="GeneID" id="93778499"/>
<dbReference type="KEGG" id="sdy:SDY_3568"/>
<dbReference type="PATRIC" id="fig|300267.13.peg.4236"/>
<dbReference type="HOGENOM" id="CLU_151816_0_0_6"/>
<dbReference type="Proteomes" id="UP000002716">
    <property type="component" value="Chromosome"/>
</dbReference>
<dbReference type="GO" id="GO:0005886">
    <property type="term" value="C:plasma membrane"/>
    <property type="evidence" value="ECO:0007669"/>
    <property type="project" value="UniProtKB-SubCell"/>
</dbReference>
<dbReference type="HAMAP" id="MF_01088">
    <property type="entry name" value="UspB"/>
    <property type="match status" value="1"/>
</dbReference>
<dbReference type="InterPro" id="IPR019598">
    <property type="entry name" value="Universal_stress_protein_B"/>
</dbReference>
<dbReference type="NCBIfam" id="NF003435">
    <property type="entry name" value="PRK04960.1"/>
    <property type="match status" value="1"/>
</dbReference>
<dbReference type="Pfam" id="PF10625">
    <property type="entry name" value="UspB"/>
    <property type="match status" value="1"/>
</dbReference>
<accession>Q32AW3</accession>
<comment type="subcellular location">
    <subcellularLocation>
        <location evidence="1">Cell inner membrane</location>
        <topology evidence="1">Multi-pass membrane protein</topology>
    </subcellularLocation>
</comment>
<comment type="similarity">
    <text evidence="1">Belongs to the universal stress protein B family.</text>
</comment>
<name>USPB_SHIDS</name>
<organism>
    <name type="scientific">Shigella dysenteriae serotype 1 (strain Sd197)</name>
    <dbReference type="NCBI Taxonomy" id="300267"/>
    <lineage>
        <taxon>Bacteria</taxon>
        <taxon>Pseudomonadati</taxon>
        <taxon>Pseudomonadota</taxon>
        <taxon>Gammaproteobacteria</taxon>
        <taxon>Enterobacterales</taxon>
        <taxon>Enterobacteriaceae</taxon>
        <taxon>Shigella</taxon>
    </lineage>
</organism>
<sequence length="111" mass="13027">MISTVALFWALCVVCIVNMARYFSSLRALLVVLRNCDPLLYQYVDGGGFFTSHGQPNKQVRLVWYIYAQRYRDHHDDEFIRRCERVRRQFILTSALCGLVVVSLIALMIWH</sequence>
<gene>
    <name evidence="1" type="primary">uspB</name>
    <name type="ordered locus">SDY_3568</name>
</gene>
<protein>
    <recommendedName>
        <fullName evidence="1">Universal stress protein B</fullName>
    </recommendedName>
</protein>
<evidence type="ECO:0000255" key="1">
    <source>
        <dbReference type="HAMAP-Rule" id="MF_01088"/>
    </source>
</evidence>
<feature type="chain" id="PRO_1000064880" description="Universal stress protein B">
    <location>
        <begin position="1"/>
        <end position="111"/>
    </location>
</feature>
<feature type="transmembrane region" description="Helical" evidence="1">
    <location>
        <begin position="1"/>
        <end position="21"/>
    </location>
</feature>
<feature type="transmembrane region" description="Helical" evidence="1">
    <location>
        <begin position="90"/>
        <end position="110"/>
    </location>
</feature>
<proteinExistence type="inferred from homology"/>